<sequence>MVLEMLNPMHYKVTSMVSEVVPFASIAVLLLTGFLLLVWNYKNTSSIPGPGYFLGIGPLISYLRFLWMGIGSACNYYNKTYGEFIRVWIGGEETLIISKSSSVFHVMKHSHYTSRFGSKPGLQFIGMHEKGIIFNNNPVLWKAVRTYFMKALSGPGLVRMVTVCADSITKHLDKLEEVRNDLGYVDVLTLMRRIMLDTSNNLFLGIPLDEKAIVCKIQGYFDAWQALLLKPDIFFKIPWLYRKYEKSVKDLKEDMEILIEKKRRRIFTAEKLEDCMDFATELILAEKRGELTKENVNQCILEMLIAAPDTMSVTVFFMLFLIAKHPQVEEELMKEIQTVVGERDIRNDDMQKLEVVENFIYESMRYQPVVDLVMRKALEDDVIDGYPVKKGTNIILNIGRMHRLEFFPKPNEFTLENFAKNVPYRYFQPFGFGPRACAGKYIAMVMMKVTLVILLRRFQVQTPQDRCVEKMQKKNDLSLHPDETSGLLEMIFIPRNSDKCFTK</sequence>
<reference key="1">
    <citation type="journal article" date="1996" name="Endocrinology">
        <title>Molecular cloning of cytochrome P450 aromatase complementary deoxyribonucleic acid from periimplantation porcine and equine blastocysts identifies multiple novel 5'-untranslated exons expressed in embryos, endometrium, and placenta.</title>
        <authorList>
            <person name="Choi I."/>
            <person name="Simmen R.C.M."/>
            <person name="Simmen F.A."/>
        </authorList>
    </citation>
    <scope>NUCLEOTIDE SEQUENCE [MRNA]</scope>
    <source>
        <tissue>Blastocyst</tissue>
    </source>
</reference>
<reference key="2">
    <citation type="journal article" date="1994" name="Mol. Reprod. Dev.">
        <title>Transient expression of the cytochrome P450 aromatase gene in elongating porcine blastocysts is correlated with uterine insulin-like growth factor levels during peri-implantation development.</title>
        <authorList>
            <person name="Ko Y."/>
            <person name="Choi I."/>
            <person name="Green M.L."/>
            <person name="Simmen F.A."/>
            <person name="Simmen R.C."/>
        </authorList>
    </citation>
    <scope>NUCLEOTIDE SEQUENCE OF 342-421</scope>
    <source>
        <tissue>Liver</tissue>
    </source>
</reference>
<proteinExistence type="evidence at transcript level"/>
<dbReference type="EC" id="1.14.14.14" evidence="2"/>
<dbReference type="EMBL" id="U37311">
    <property type="protein sequence ID" value="AAC48543.1"/>
    <property type="molecule type" value="mRNA"/>
</dbReference>
<dbReference type="EMBL" id="U37312">
    <property type="protein sequence ID" value="AAC48544.1"/>
    <property type="molecule type" value="mRNA"/>
</dbReference>
<dbReference type="EMBL" id="U37309">
    <property type="protein sequence ID" value="AAC48541.1"/>
    <property type="molecule type" value="mRNA"/>
</dbReference>
<dbReference type="EMBL" id="U37310">
    <property type="protein sequence ID" value="AAC48542.1"/>
    <property type="molecule type" value="mRNA"/>
</dbReference>
<dbReference type="EMBL" id="L15471">
    <property type="protein sequence ID" value="AAA19817.1"/>
    <property type="molecule type" value="Unassigned_DNA"/>
</dbReference>
<dbReference type="PIR" id="I46570">
    <property type="entry name" value="I46570"/>
</dbReference>
<dbReference type="RefSeq" id="NP_999594.1">
    <property type="nucleotide sequence ID" value="NM_214429.1"/>
</dbReference>
<dbReference type="SMR" id="Q29624"/>
<dbReference type="FunCoup" id="Q29624">
    <property type="interactions" value="48"/>
</dbReference>
<dbReference type="PeptideAtlas" id="Q29624"/>
<dbReference type="Ensembl" id="ENSSSCT00070009182.1">
    <property type="protein sequence ID" value="ENSSSCP00070007532.1"/>
    <property type="gene ID" value="ENSSSCG00070004855.1"/>
</dbReference>
<dbReference type="GeneID" id="403331"/>
<dbReference type="KEGG" id="ssc:403331"/>
<dbReference type="CTD" id="1588"/>
<dbReference type="InParanoid" id="Q29624"/>
<dbReference type="OrthoDB" id="1470350at2759"/>
<dbReference type="Proteomes" id="UP000008227">
    <property type="component" value="Unplaced"/>
</dbReference>
<dbReference type="Proteomes" id="UP000314985">
    <property type="component" value="Chromosome 1"/>
</dbReference>
<dbReference type="Proteomes" id="UP000694570">
    <property type="component" value="Unplaced"/>
</dbReference>
<dbReference type="Proteomes" id="UP000694571">
    <property type="component" value="Unplaced"/>
</dbReference>
<dbReference type="Proteomes" id="UP000694720">
    <property type="component" value="Unplaced"/>
</dbReference>
<dbReference type="Proteomes" id="UP000694722">
    <property type="component" value="Unplaced"/>
</dbReference>
<dbReference type="Proteomes" id="UP000694723">
    <property type="component" value="Unplaced"/>
</dbReference>
<dbReference type="Proteomes" id="UP000694724">
    <property type="component" value="Unplaced"/>
</dbReference>
<dbReference type="Proteomes" id="UP000694725">
    <property type="component" value="Unplaced"/>
</dbReference>
<dbReference type="Proteomes" id="UP000694726">
    <property type="component" value="Unplaced"/>
</dbReference>
<dbReference type="Proteomes" id="UP000694727">
    <property type="component" value="Unplaced"/>
</dbReference>
<dbReference type="Proteomes" id="UP000694728">
    <property type="component" value="Unplaced"/>
</dbReference>
<dbReference type="GO" id="GO:0005783">
    <property type="term" value="C:endoplasmic reticulum"/>
    <property type="evidence" value="ECO:0000318"/>
    <property type="project" value="GO_Central"/>
</dbReference>
<dbReference type="GO" id="GO:0016020">
    <property type="term" value="C:membrane"/>
    <property type="evidence" value="ECO:0007669"/>
    <property type="project" value="UniProtKB-SubCell"/>
</dbReference>
<dbReference type="GO" id="GO:0070330">
    <property type="term" value="F:aromatase activity"/>
    <property type="evidence" value="ECO:0000318"/>
    <property type="project" value="GO_Central"/>
</dbReference>
<dbReference type="GO" id="GO:0020037">
    <property type="term" value="F:heme binding"/>
    <property type="evidence" value="ECO:0007669"/>
    <property type="project" value="InterPro"/>
</dbReference>
<dbReference type="GO" id="GO:0005506">
    <property type="term" value="F:iron ion binding"/>
    <property type="evidence" value="ECO:0007669"/>
    <property type="project" value="InterPro"/>
</dbReference>
<dbReference type="GO" id="GO:0008585">
    <property type="term" value="P:female gonad development"/>
    <property type="evidence" value="ECO:0000318"/>
    <property type="project" value="GO_Central"/>
</dbReference>
<dbReference type="GO" id="GO:0006629">
    <property type="term" value="P:lipid metabolic process"/>
    <property type="evidence" value="ECO:0007669"/>
    <property type="project" value="UniProtKB-KW"/>
</dbReference>
<dbReference type="GO" id="GO:0032355">
    <property type="term" value="P:response to estradiol"/>
    <property type="evidence" value="ECO:0000318"/>
    <property type="project" value="GO_Central"/>
</dbReference>
<dbReference type="CDD" id="cd20616">
    <property type="entry name" value="CYP19A1"/>
    <property type="match status" value="1"/>
</dbReference>
<dbReference type="FunFam" id="1.10.630.10:FF:000032">
    <property type="entry name" value="Cytochrome P450 aromatase"/>
    <property type="match status" value="1"/>
</dbReference>
<dbReference type="Gene3D" id="1.10.630.10">
    <property type="entry name" value="Cytochrome P450"/>
    <property type="match status" value="1"/>
</dbReference>
<dbReference type="InterPro" id="IPR001128">
    <property type="entry name" value="Cyt_P450"/>
</dbReference>
<dbReference type="InterPro" id="IPR017972">
    <property type="entry name" value="Cyt_P450_CS"/>
</dbReference>
<dbReference type="InterPro" id="IPR002401">
    <property type="entry name" value="Cyt_P450_E_grp-I"/>
</dbReference>
<dbReference type="InterPro" id="IPR036396">
    <property type="entry name" value="Cyt_P450_sf"/>
</dbReference>
<dbReference type="InterPro" id="IPR050196">
    <property type="entry name" value="Cytochrome_P450_Monoox"/>
</dbReference>
<dbReference type="PANTHER" id="PTHR24291:SF43">
    <property type="entry name" value="AROMATASE"/>
    <property type="match status" value="1"/>
</dbReference>
<dbReference type="PANTHER" id="PTHR24291">
    <property type="entry name" value="CYTOCHROME P450 FAMILY 4"/>
    <property type="match status" value="1"/>
</dbReference>
<dbReference type="Pfam" id="PF00067">
    <property type="entry name" value="p450"/>
    <property type="match status" value="1"/>
</dbReference>
<dbReference type="PRINTS" id="PR00463">
    <property type="entry name" value="EP450I"/>
</dbReference>
<dbReference type="PRINTS" id="PR00385">
    <property type="entry name" value="P450"/>
</dbReference>
<dbReference type="SUPFAM" id="SSF48264">
    <property type="entry name" value="Cytochrome P450"/>
    <property type="match status" value="1"/>
</dbReference>
<dbReference type="PROSITE" id="PS00086">
    <property type="entry name" value="CYTOCHROME_P450"/>
    <property type="match status" value="1"/>
</dbReference>
<comment type="function">
    <text>Catalyzes the formation of aromatic C18 estrogens from C19 androgens.</text>
</comment>
<comment type="catalytic activity">
    <reaction evidence="2">
        <text>testosterone + 3 reduced [NADPH--hemoprotein reductase] + 3 O2 = 17beta-estradiol + formate + 3 oxidized [NADPH--hemoprotein reductase] + 4 H2O + 4 H(+)</text>
        <dbReference type="Rhea" id="RHEA:38191"/>
        <dbReference type="Rhea" id="RHEA-COMP:11964"/>
        <dbReference type="Rhea" id="RHEA-COMP:11965"/>
        <dbReference type="ChEBI" id="CHEBI:15377"/>
        <dbReference type="ChEBI" id="CHEBI:15378"/>
        <dbReference type="ChEBI" id="CHEBI:15379"/>
        <dbReference type="ChEBI" id="CHEBI:15740"/>
        <dbReference type="ChEBI" id="CHEBI:16469"/>
        <dbReference type="ChEBI" id="CHEBI:17347"/>
        <dbReference type="ChEBI" id="CHEBI:57618"/>
        <dbReference type="ChEBI" id="CHEBI:58210"/>
        <dbReference type="EC" id="1.14.14.14"/>
    </reaction>
</comment>
<comment type="catalytic activity">
    <reaction evidence="2">
        <text>androst-4-ene-3,17-dione + 3 reduced [NADPH--hemoprotein reductase] + 3 O2 = estrone + formate + 3 oxidized [NADPH--hemoprotein reductase] + 4 H2O + 4 H(+)</text>
        <dbReference type="Rhea" id="RHEA:38195"/>
        <dbReference type="Rhea" id="RHEA-COMP:11964"/>
        <dbReference type="Rhea" id="RHEA-COMP:11965"/>
        <dbReference type="ChEBI" id="CHEBI:15377"/>
        <dbReference type="ChEBI" id="CHEBI:15378"/>
        <dbReference type="ChEBI" id="CHEBI:15379"/>
        <dbReference type="ChEBI" id="CHEBI:15740"/>
        <dbReference type="ChEBI" id="CHEBI:16422"/>
        <dbReference type="ChEBI" id="CHEBI:17263"/>
        <dbReference type="ChEBI" id="CHEBI:57618"/>
        <dbReference type="ChEBI" id="CHEBI:58210"/>
        <dbReference type="EC" id="1.14.14.14"/>
    </reaction>
</comment>
<comment type="cofactor">
    <cofactor evidence="1">
        <name>heme</name>
        <dbReference type="ChEBI" id="CHEBI:30413"/>
    </cofactor>
</comment>
<comment type="subcellular location">
    <subcellularLocation>
        <location>Membrane</location>
        <topology>Peripheral membrane protein</topology>
    </subcellularLocation>
</comment>
<comment type="similarity">
    <text evidence="3">Belongs to the cytochrome P450 family.</text>
</comment>
<gene>
    <name type="primary">CYP19A1</name>
    <name type="synonym">CYP19</name>
</gene>
<organism>
    <name type="scientific">Sus scrofa</name>
    <name type="common">Pig</name>
    <dbReference type="NCBI Taxonomy" id="9823"/>
    <lineage>
        <taxon>Eukaryota</taxon>
        <taxon>Metazoa</taxon>
        <taxon>Chordata</taxon>
        <taxon>Craniata</taxon>
        <taxon>Vertebrata</taxon>
        <taxon>Euteleostomi</taxon>
        <taxon>Mammalia</taxon>
        <taxon>Eutheria</taxon>
        <taxon>Laurasiatheria</taxon>
        <taxon>Artiodactyla</taxon>
        <taxon>Suina</taxon>
        <taxon>Suidae</taxon>
        <taxon>Sus</taxon>
    </lineage>
</organism>
<name>CP19A_PIG</name>
<evidence type="ECO:0000250" key="1"/>
<evidence type="ECO:0000250" key="2">
    <source>
        <dbReference type="UniProtKB" id="P11511"/>
    </source>
</evidence>
<evidence type="ECO:0000305" key="3"/>
<keyword id="KW-0349">Heme</keyword>
<keyword id="KW-0408">Iron</keyword>
<keyword id="KW-0443">Lipid metabolism</keyword>
<keyword id="KW-0472">Membrane</keyword>
<keyword id="KW-0479">Metal-binding</keyword>
<keyword id="KW-0503">Monooxygenase</keyword>
<keyword id="KW-0560">Oxidoreductase</keyword>
<keyword id="KW-1185">Reference proteome</keyword>
<feature type="chain" id="PRO_0000051958" description="Aromatase 1">
    <location>
        <begin position="1"/>
        <end position="503"/>
    </location>
</feature>
<feature type="binding site" description="axial binding residue" evidence="1">
    <location>
        <position position="437"/>
    </location>
    <ligand>
        <name>heme</name>
        <dbReference type="ChEBI" id="CHEBI:30413"/>
    </ligand>
    <ligandPart>
        <name>Fe</name>
        <dbReference type="ChEBI" id="CHEBI:18248"/>
    </ligandPart>
</feature>
<accession>Q29624</accession>
<protein>
    <recommendedName>
        <fullName>Aromatase 1</fullName>
        <ecNumber evidence="2">1.14.14.14</ecNumber>
    </recommendedName>
    <alternativeName>
        <fullName>CYPXIXA1</fullName>
    </alternativeName>
    <alternativeName>
        <fullName>Cytochrome P-450AROM</fullName>
    </alternativeName>
    <alternativeName>
        <fullName>Cytochrome P450 19 type I</fullName>
    </alternativeName>
    <alternativeName>
        <fullName>Estrogen synthase</fullName>
    </alternativeName>
</protein>